<protein>
    <recommendedName>
        <fullName evidence="1">Small ribosomal subunit protein uS17</fullName>
    </recommendedName>
    <alternativeName>
        <fullName evidence="2">30S ribosomal protein S17</fullName>
    </alternativeName>
</protein>
<evidence type="ECO:0000255" key="1">
    <source>
        <dbReference type="HAMAP-Rule" id="MF_01345"/>
    </source>
</evidence>
<evidence type="ECO:0000305" key="2"/>
<feature type="chain" id="PRO_0000233448" description="Small ribosomal subunit protein uS17">
    <location>
        <begin position="1"/>
        <end position="90"/>
    </location>
</feature>
<organism>
    <name type="scientific">Burkholderia lata (strain ATCC 17760 / DSM 23089 / LMG 22485 / NCIMB 9086 / R18194 / 383)</name>
    <dbReference type="NCBI Taxonomy" id="482957"/>
    <lineage>
        <taxon>Bacteria</taxon>
        <taxon>Pseudomonadati</taxon>
        <taxon>Pseudomonadota</taxon>
        <taxon>Betaproteobacteria</taxon>
        <taxon>Burkholderiales</taxon>
        <taxon>Burkholderiaceae</taxon>
        <taxon>Burkholderia</taxon>
        <taxon>Burkholderia cepacia complex</taxon>
    </lineage>
</organism>
<sequence length="90" mass="10321">MNDSVKTSLKRTLVGRVVSNKMDKTVTVLIEHRVKHPIYGKYVVRSKKYHAHDEANTYNEGDLVEIQETRPVSKTKAWTVSRLVEAARVI</sequence>
<reference key="1">
    <citation type="submission" date="2005-10" db="EMBL/GenBank/DDBJ databases">
        <title>Complete sequence of chromosome 1 of Burkholderia sp. 383.</title>
        <authorList>
            <consortium name="US DOE Joint Genome Institute"/>
            <person name="Copeland A."/>
            <person name="Lucas S."/>
            <person name="Lapidus A."/>
            <person name="Barry K."/>
            <person name="Detter J.C."/>
            <person name="Glavina T."/>
            <person name="Hammon N."/>
            <person name="Israni S."/>
            <person name="Pitluck S."/>
            <person name="Chain P."/>
            <person name="Malfatti S."/>
            <person name="Shin M."/>
            <person name="Vergez L."/>
            <person name="Schmutz J."/>
            <person name="Larimer F."/>
            <person name="Land M."/>
            <person name="Kyrpides N."/>
            <person name="Lykidis A."/>
            <person name="Richardson P."/>
        </authorList>
    </citation>
    <scope>NUCLEOTIDE SEQUENCE [LARGE SCALE GENOMIC DNA]</scope>
    <source>
        <strain>ATCC 17760 / DSM 23089 / LMG 22485 / NCIMB 9086 / R18194 / 383</strain>
    </source>
</reference>
<name>RS17_BURL3</name>
<accession>Q39KF8</accession>
<gene>
    <name evidence="1" type="primary">rpsQ</name>
    <name type="ordered locus">Bcep18194_A3456</name>
</gene>
<dbReference type="EMBL" id="CP000151">
    <property type="protein sequence ID" value="ABB07058.1"/>
    <property type="molecule type" value="Genomic_DNA"/>
</dbReference>
<dbReference type="RefSeq" id="WP_006477189.1">
    <property type="nucleotide sequence ID" value="NZ_WNDV01000034.1"/>
</dbReference>
<dbReference type="SMR" id="Q39KF8"/>
<dbReference type="GeneID" id="93193442"/>
<dbReference type="KEGG" id="bur:Bcep18194_A3456"/>
<dbReference type="HOGENOM" id="CLU_073626_1_1_4"/>
<dbReference type="Proteomes" id="UP000002705">
    <property type="component" value="Chromosome 1"/>
</dbReference>
<dbReference type="GO" id="GO:0022627">
    <property type="term" value="C:cytosolic small ribosomal subunit"/>
    <property type="evidence" value="ECO:0007669"/>
    <property type="project" value="TreeGrafter"/>
</dbReference>
<dbReference type="GO" id="GO:0019843">
    <property type="term" value="F:rRNA binding"/>
    <property type="evidence" value="ECO:0007669"/>
    <property type="project" value="UniProtKB-UniRule"/>
</dbReference>
<dbReference type="GO" id="GO:0003735">
    <property type="term" value="F:structural constituent of ribosome"/>
    <property type="evidence" value="ECO:0007669"/>
    <property type="project" value="InterPro"/>
</dbReference>
<dbReference type="GO" id="GO:0006412">
    <property type="term" value="P:translation"/>
    <property type="evidence" value="ECO:0007669"/>
    <property type="project" value="UniProtKB-UniRule"/>
</dbReference>
<dbReference type="CDD" id="cd00364">
    <property type="entry name" value="Ribosomal_uS17"/>
    <property type="match status" value="1"/>
</dbReference>
<dbReference type="Gene3D" id="2.40.50.140">
    <property type="entry name" value="Nucleic acid-binding proteins"/>
    <property type="match status" value="1"/>
</dbReference>
<dbReference type="HAMAP" id="MF_01345_B">
    <property type="entry name" value="Ribosomal_uS17_B"/>
    <property type="match status" value="1"/>
</dbReference>
<dbReference type="InterPro" id="IPR012340">
    <property type="entry name" value="NA-bd_OB-fold"/>
</dbReference>
<dbReference type="InterPro" id="IPR000266">
    <property type="entry name" value="Ribosomal_uS17"/>
</dbReference>
<dbReference type="InterPro" id="IPR019984">
    <property type="entry name" value="Ribosomal_uS17_bact/chlr"/>
</dbReference>
<dbReference type="InterPro" id="IPR019979">
    <property type="entry name" value="Ribosomal_uS17_CS"/>
</dbReference>
<dbReference type="NCBIfam" id="NF004123">
    <property type="entry name" value="PRK05610.1"/>
    <property type="match status" value="1"/>
</dbReference>
<dbReference type="NCBIfam" id="TIGR03635">
    <property type="entry name" value="uS17_bact"/>
    <property type="match status" value="1"/>
</dbReference>
<dbReference type="PANTHER" id="PTHR10744">
    <property type="entry name" value="40S RIBOSOMAL PROTEIN S11 FAMILY MEMBER"/>
    <property type="match status" value="1"/>
</dbReference>
<dbReference type="PANTHER" id="PTHR10744:SF1">
    <property type="entry name" value="SMALL RIBOSOMAL SUBUNIT PROTEIN US17M"/>
    <property type="match status" value="1"/>
</dbReference>
<dbReference type="Pfam" id="PF00366">
    <property type="entry name" value="Ribosomal_S17"/>
    <property type="match status" value="1"/>
</dbReference>
<dbReference type="PRINTS" id="PR00973">
    <property type="entry name" value="RIBOSOMALS17"/>
</dbReference>
<dbReference type="SUPFAM" id="SSF50249">
    <property type="entry name" value="Nucleic acid-binding proteins"/>
    <property type="match status" value="1"/>
</dbReference>
<dbReference type="PROSITE" id="PS00056">
    <property type="entry name" value="RIBOSOMAL_S17"/>
    <property type="match status" value="1"/>
</dbReference>
<proteinExistence type="inferred from homology"/>
<comment type="function">
    <text evidence="1">One of the primary rRNA binding proteins, it binds specifically to the 5'-end of 16S ribosomal RNA.</text>
</comment>
<comment type="subunit">
    <text evidence="1">Part of the 30S ribosomal subunit.</text>
</comment>
<comment type="similarity">
    <text evidence="1">Belongs to the universal ribosomal protein uS17 family.</text>
</comment>
<keyword id="KW-0687">Ribonucleoprotein</keyword>
<keyword id="KW-0689">Ribosomal protein</keyword>
<keyword id="KW-0694">RNA-binding</keyword>
<keyword id="KW-0699">rRNA-binding</keyword>